<gene>
    <name evidence="1" type="primary">lspA</name>
    <name type="ordered locus">M446_2219</name>
</gene>
<evidence type="ECO:0000255" key="1">
    <source>
        <dbReference type="HAMAP-Rule" id="MF_00161"/>
    </source>
</evidence>
<sequence>MRPLILGLATAAATLVLDQATKLGLLLLADLPARQPVVLAPFAQLVVVWNRGVSYGLFQQHTELGRWLLVGVAVLAAAALGAWMARAGSRLLVLSLGLIVGGAVGNAVDRVAYGAVFDFVHLHAGGWSWYVFNVADAGIVAGVAGLLVETVWSEARGDAAMRPDG</sequence>
<accession>B0UDF9</accession>
<keyword id="KW-0064">Aspartyl protease</keyword>
<keyword id="KW-0997">Cell inner membrane</keyword>
<keyword id="KW-1003">Cell membrane</keyword>
<keyword id="KW-0378">Hydrolase</keyword>
<keyword id="KW-0472">Membrane</keyword>
<keyword id="KW-0645">Protease</keyword>
<keyword id="KW-0812">Transmembrane</keyword>
<keyword id="KW-1133">Transmembrane helix</keyword>
<feature type="chain" id="PRO_1000097265" description="Lipoprotein signal peptidase">
    <location>
        <begin position="1"/>
        <end position="165"/>
    </location>
</feature>
<feature type="transmembrane region" description="Helical" evidence="1">
    <location>
        <begin position="64"/>
        <end position="84"/>
    </location>
</feature>
<feature type="transmembrane region" description="Helical" evidence="1">
    <location>
        <begin position="88"/>
        <end position="108"/>
    </location>
</feature>
<feature type="transmembrane region" description="Helical" evidence="1">
    <location>
        <begin position="128"/>
        <end position="148"/>
    </location>
</feature>
<feature type="active site" evidence="1">
    <location>
        <position position="118"/>
    </location>
</feature>
<feature type="active site" evidence="1">
    <location>
        <position position="136"/>
    </location>
</feature>
<name>LSPA_METS4</name>
<dbReference type="EC" id="3.4.23.36" evidence="1"/>
<dbReference type="EMBL" id="CP000943">
    <property type="protein sequence ID" value="ACA16680.1"/>
    <property type="molecule type" value="Genomic_DNA"/>
</dbReference>
<dbReference type="RefSeq" id="WP_012332089.1">
    <property type="nucleotide sequence ID" value="NC_010511.1"/>
</dbReference>
<dbReference type="SMR" id="B0UDF9"/>
<dbReference type="STRING" id="426117.M446_2219"/>
<dbReference type="KEGG" id="met:M446_2219"/>
<dbReference type="eggNOG" id="COG0597">
    <property type="taxonomic scope" value="Bacteria"/>
</dbReference>
<dbReference type="HOGENOM" id="CLU_083252_4_3_5"/>
<dbReference type="UniPathway" id="UPA00665"/>
<dbReference type="GO" id="GO:0005886">
    <property type="term" value="C:plasma membrane"/>
    <property type="evidence" value="ECO:0007669"/>
    <property type="project" value="UniProtKB-SubCell"/>
</dbReference>
<dbReference type="GO" id="GO:0004190">
    <property type="term" value="F:aspartic-type endopeptidase activity"/>
    <property type="evidence" value="ECO:0007669"/>
    <property type="project" value="UniProtKB-UniRule"/>
</dbReference>
<dbReference type="GO" id="GO:0006508">
    <property type="term" value="P:proteolysis"/>
    <property type="evidence" value="ECO:0007669"/>
    <property type="project" value="UniProtKB-KW"/>
</dbReference>
<dbReference type="HAMAP" id="MF_00161">
    <property type="entry name" value="LspA"/>
    <property type="match status" value="1"/>
</dbReference>
<dbReference type="InterPro" id="IPR001872">
    <property type="entry name" value="Peptidase_A8"/>
</dbReference>
<dbReference type="NCBIfam" id="TIGR00077">
    <property type="entry name" value="lspA"/>
    <property type="match status" value="1"/>
</dbReference>
<dbReference type="PANTHER" id="PTHR33695">
    <property type="entry name" value="LIPOPROTEIN SIGNAL PEPTIDASE"/>
    <property type="match status" value="1"/>
</dbReference>
<dbReference type="PANTHER" id="PTHR33695:SF1">
    <property type="entry name" value="LIPOPROTEIN SIGNAL PEPTIDASE"/>
    <property type="match status" value="1"/>
</dbReference>
<dbReference type="Pfam" id="PF01252">
    <property type="entry name" value="Peptidase_A8"/>
    <property type="match status" value="1"/>
</dbReference>
<dbReference type="PRINTS" id="PR00781">
    <property type="entry name" value="LIPOSIGPTASE"/>
</dbReference>
<dbReference type="PROSITE" id="PS00855">
    <property type="entry name" value="SPASE_II"/>
    <property type="match status" value="1"/>
</dbReference>
<protein>
    <recommendedName>
        <fullName evidence="1">Lipoprotein signal peptidase</fullName>
        <ecNumber evidence="1">3.4.23.36</ecNumber>
    </recommendedName>
    <alternativeName>
        <fullName evidence="1">Prolipoprotein signal peptidase</fullName>
    </alternativeName>
    <alternativeName>
        <fullName evidence="1">Signal peptidase II</fullName>
        <shortName evidence="1">SPase II</shortName>
    </alternativeName>
</protein>
<organism>
    <name type="scientific">Methylobacterium sp. (strain 4-46)</name>
    <dbReference type="NCBI Taxonomy" id="426117"/>
    <lineage>
        <taxon>Bacteria</taxon>
        <taxon>Pseudomonadati</taxon>
        <taxon>Pseudomonadota</taxon>
        <taxon>Alphaproteobacteria</taxon>
        <taxon>Hyphomicrobiales</taxon>
        <taxon>Methylobacteriaceae</taxon>
        <taxon>Methylobacterium</taxon>
    </lineage>
</organism>
<comment type="function">
    <text evidence="1">This protein specifically catalyzes the removal of signal peptides from prolipoproteins.</text>
</comment>
<comment type="catalytic activity">
    <reaction evidence="1">
        <text>Release of signal peptides from bacterial membrane prolipoproteins. Hydrolyzes -Xaa-Yaa-Zaa-|-(S,diacylglyceryl)Cys-, in which Xaa is hydrophobic (preferably Leu), and Yaa (Ala or Ser) and Zaa (Gly or Ala) have small, neutral side chains.</text>
        <dbReference type="EC" id="3.4.23.36"/>
    </reaction>
</comment>
<comment type="pathway">
    <text evidence="1">Protein modification; lipoprotein biosynthesis (signal peptide cleavage).</text>
</comment>
<comment type="subcellular location">
    <subcellularLocation>
        <location evidence="1">Cell inner membrane</location>
        <topology evidence="1">Multi-pass membrane protein</topology>
    </subcellularLocation>
</comment>
<comment type="similarity">
    <text evidence="1">Belongs to the peptidase A8 family.</text>
</comment>
<reference key="1">
    <citation type="submission" date="2008-02" db="EMBL/GenBank/DDBJ databases">
        <title>Complete sequence of chromosome of Methylobacterium sp. 4-46.</title>
        <authorList>
            <consortium name="US DOE Joint Genome Institute"/>
            <person name="Copeland A."/>
            <person name="Lucas S."/>
            <person name="Lapidus A."/>
            <person name="Glavina del Rio T."/>
            <person name="Dalin E."/>
            <person name="Tice H."/>
            <person name="Bruce D."/>
            <person name="Goodwin L."/>
            <person name="Pitluck S."/>
            <person name="Chertkov O."/>
            <person name="Brettin T."/>
            <person name="Detter J.C."/>
            <person name="Han C."/>
            <person name="Kuske C.R."/>
            <person name="Schmutz J."/>
            <person name="Larimer F."/>
            <person name="Land M."/>
            <person name="Hauser L."/>
            <person name="Kyrpides N."/>
            <person name="Ivanova N."/>
            <person name="Marx C.J."/>
            <person name="Richardson P."/>
        </authorList>
    </citation>
    <scope>NUCLEOTIDE SEQUENCE [LARGE SCALE GENOMIC DNA]</scope>
    <source>
        <strain>4-46</strain>
    </source>
</reference>
<proteinExistence type="inferred from homology"/>